<proteinExistence type="inferred from homology"/>
<keyword id="KW-0413">Isomerase</keyword>
<keyword id="KW-0460">Magnesium</keyword>
<keyword id="KW-0479">Metal-binding</keyword>
<keyword id="KW-0597">Phosphoprotein</keyword>
<feature type="chain" id="PRO_0000305634" description="Phosphoglucosamine mutase">
    <location>
        <begin position="1"/>
        <end position="451"/>
    </location>
</feature>
<feature type="active site" description="Phosphoserine intermediate" evidence="1">
    <location>
        <position position="102"/>
    </location>
</feature>
<feature type="binding site" description="via phosphate group" evidence="1">
    <location>
        <position position="102"/>
    </location>
    <ligand>
        <name>Mg(2+)</name>
        <dbReference type="ChEBI" id="CHEBI:18420"/>
    </ligand>
</feature>
<feature type="binding site" evidence="1">
    <location>
        <position position="243"/>
    </location>
    <ligand>
        <name>Mg(2+)</name>
        <dbReference type="ChEBI" id="CHEBI:18420"/>
    </ligand>
</feature>
<feature type="binding site" evidence="1">
    <location>
        <position position="245"/>
    </location>
    <ligand>
        <name>Mg(2+)</name>
        <dbReference type="ChEBI" id="CHEBI:18420"/>
    </ligand>
</feature>
<feature type="binding site" evidence="1">
    <location>
        <position position="247"/>
    </location>
    <ligand>
        <name>Mg(2+)</name>
        <dbReference type="ChEBI" id="CHEBI:18420"/>
    </ligand>
</feature>
<feature type="modified residue" description="Phosphoserine" evidence="1">
    <location>
        <position position="102"/>
    </location>
</feature>
<gene>
    <name evidence="1" type="primary">glmM</name>
    <name type="ordered locus">BOV_1634</name>
</gene>
<organism>
    <name type="scientific">Brucella ovis (strain ATCC 25840 / 63/290 / NCTC 10512)</name>
    <dbReference type="NCBI Taxonomy" id="444178"/>
    <lineage>
        <taxon>Bacteria</taxon>
        <taxon>Pseudomonadati</taxon>
        <taxon>Pseudomonadota</taxon>
        <taxon>Alphaproteobacteria</taxon>
        <taxon>Hyphomicrobiales</taxon>
        <taxon>Brucellaceae</taxon>
        <taxon>Brucella/Ochrobactrum group</taxon>
        <taxon>Brucella</taxon>
    </lineage>
</organism>
<comment type="function">
    <text evidence="1">Catalyzes the conversion of glucosamine-6-phosphate to glucosamine-1-phosphate.</text>
</comment>
<comment type="catalytic activity">
    <reaction evidence="1">
        <text>alpha-D-glucosamine 1-phosphate = D-glucosamine 6-phosphate</text>
        <dbReference type="Rhea" id="RHEA:23424"/>
        <dbReference type="ChEBI" id="CHEBI:58516"/>
        <dbReference type="ChEBI" id="CHEBI:58725"/>
        <dbReference type="EC" id="5.4.2.10"/>
    </reaction>
</comment>
<comment type="cofactor">
    <cofactor evidence="1">
        <name>Mg(2+)</name>
        <dbReference type="ChEBI" id="CHEBI:18420"/>
    </cofactor>
    <text evidence="1">Binds 1 Mg(2+) ion per subunit.</text>
</comment>
<comment type="PTM">
    <text evidence="1">Activated by phosphorylation.</text>
</comment>
<comment type="similarity">
    <text evidence="1">Belongs to the phosphohexose mutase family.</text>
</comment>
<name>GLMM_BRUO2</name>
<reference key="1">
    <citation type="journal article" date="2009" name="PLoS ONE">
        <title>Genome degradation in Brucella ovis corresponds with narrowing of its host range and tissue tropism.</title>
        <authorList>
            <person name="Tsolis R.M."/>
            <person name="Seshadri R."/>
            <person name="Santos R.L."/>
            <person name="Sangari F.J."/>
            <person name="Lobo J.M."/>
            <person name="de Jong M.F."/>
            <person name="Ren Q."/>
            <person name="Myers G."/>
            <person name="Brinkac L.M."/>
            <person name="Nelson W.C."/>
            <person name="Deboy R.T."/>
            <person name="Angiuoli S."/>
            <person name="Khouri H."/>
            <person name="Dimitrov G."/>
            <person name="Robinson J.R."/>
            <person name="Mulligan S."/>
            <person name="Walker R.L."/>
            <person name="Elzer P.E."/>
            <person name="Hassan K.A."/>
            <person name="Paulsen I.T."/>
        </authorList>
    </citation>
    <scope>NUCLEOTIDE SEQUENCE [LARGE SCALE GENOMIC DNA]</scope>
    <source>
        <strain>ATCC 25840 / 63/290 / NCTC 10512</strain>
    </source>
</reference>
<dbReference type="EC" id="5.4.2.10" evidence="1"/>
<dbReference type="EMBL" id="CP000708">
    <property type="protein sequence ID" value="ABQ60403.1"/>
    <property type="molecule type" value="Genomic_DNA"/>
</dbReference>
<dbReference type="SMR" id="A5VS47"/>
<dbReference type="KEGG" id="bov:BOV_1634"/>
<dbReference type="HOGENOM" id="CLU_016950_7_0_5"/>
<dbReference type="PhylomeDB" id="A5VS47"/>
<dbReference type="Proteomes" id="UP000006383">
    <property type="component" value="Chromosome I"/>
</dbReference>
<dbReference type="GO" id="GO:0005829">
    <property type="term" value="C:cytosol"/>
    <property type="evidence" value="ECO:0007669"/>
    <property type="project" value="TreeGrafter"/>
</dbReference>
<dbReference type="GO" id="GO:0000287">
    <property type="term" value="F:magnesium ion binding"/>
    <property type="evidence" value="ECO:0007669"/>
    <property type="project" value="UniProtKB-UniRule"/>
</dbReference>
<dbReference type="GO" id="GO:0008966">
    <property type="term" value="F:phosphoglucosamine mutase activity"/>
    <property type="evidence" value="ECO:0007669"/>
    <property type="project" value="UniProtKB-UniRule"/>
</dbReference>
<dbReference type="GO" id="GO:0004615">
    <property type="term" value="F:phosphomannomutase activity"/>
    <property type="evidence" value="ECO:0007669"/>
    <property type="project" value="TreeGrafter"/>
</dbReference>
<dbReference type="GO" id="GO:0005975">
    <property type="term" value="P:carbohydrate metabolic process"/>
    <property type="evidence" value="ECO:0007669"/>
    <property type="project" value="InterPro"/>
</dbReference>
<dbReference type="GO" id="GO:0009252">
    <property type="term" value="P:peptidoglycan biosynthetic process"/>
    <property type="evidence" value="ECO:0007669"/>
    <property type="project" value="TreeGrafter"/>
</dbReference>
<dbReference type="GO" id="GO:0006048">
    <property type="term" value="P:UDP-N-acetylglucosamine biosynthetic process"/>
    <property type="evidence" value="ECO:0007669"/>
    <property type="project" value="TreeGrafter"/>
</dbReference>
<dbReference type="CDD" id="cd05802">
    <property type="entry name" value="GlmM"/>
    <property type="match status" value="1"/>
</dbReference>
<dbReference type="FunFam" id="3.30.310.50:FF:000001">
    <property type="entry name" value="Phosphoglucosamine mutase"/>
    <property type="match status" value="1"/>
</dbReference>
<dbReference type="FunFam" id="3.40.120.10:FF:000001">
    <property type="entry name" value="Phosphoglucosamine mutase"/>
    <property type="match status" value="1"/>
</dbReference>
<dbReference type="FunFam" id="3.40.120.10:FF:000003">
    <property type="entry name" value="Phosphoglucosamine mutase"/>
    <property type="match status" value="1"/>
</dbReference>
<dbReference type="Gene3D" id="3.40.120.10">
    <property type="entry name" value="Alpha-D-Glucose-1,6-Bisphosphate, subunit A, domain 3"/>
    <property type="match status" value="3"/>
</dbReference>
<dbReference type="Gene3D" id="3.30.310.50">
    <property type="entry name" value="Alpha-D-phosphohexomutase, C-terminal domain"/>
    <property type="match status" value="1"/>
</dbReference>
<dbReference type="HAMAP" id="MF_01554_B">
    <property type="entry name" value="GlmM_B"/>
    <property type="match status" value="1"/>
</dbReference>
<dbReference type="InterPro" id="IPR005844">
    <property type="entry name" value="A-D-PHexomutase_a/b/a-I"/>
</dbReference>
<dbReference type="InterPro" id="IPR016055">
    <property type="entry name" value="A-D-PHexomutase_a/b/a-I/II/III"/>
</dbReference>
<dbReference type="InterPro" id="IPR005845">
    <property type="entry name" value="A-D-PHexomutase_a/b/a-II"/>
</dbReference>
<dbReference type="InterPro" id="IPR005846">
    <property type="entry name" value="A-D-PHexomutase_a/b/a-III"/>
</dbReference>
<dbReference type="InterPro" id="IPR005843">
    <property type="entry name" value="A-D-PHexomutase_C"/>
</dbReference>
<dbReference type="InterPro" id="IPR036900">
    <property type="entry name" value="A-D-PHexomutase_C_sf"/>
</dbReference>
<dbReference type="InterPro" id="IPR016066">
    <property type="entry name" value="A-D-PHexomutase_CS"/>
</dbReference>
<dbReference type="InterPro" id="IPR005841">
    <property type="entry name" value="Alpha-D-phosphohexomutase_SF"/>
</dbReference>
<dbReference type="InterPro" id="IPR006352">
    <property type="entry name" value="GlmM_bact"/>
</dbReference>
<dbReference type="InterPro" id="IPR050060">
    <property type="entry name" value="Phosphoglucosamine_mutase"/>
</dbReference>
<dbReference type="NCBIfam" id="TIGR01455">
    <property type="entry name" value="glmM"/>
    <property type="match status" value="1"/>
</dbReference>
<dbReference type="NCBIfam" id="NF008139">
    <property type="entry name" value="PRK10887.1"/>
    <property type="match status" value="1"/>
</dbReference>
<dbReference type="PANTHER" id="PTHR42946:SF1">
    <property type="entry name" value="PHOSPHOGLUCOMUTASE (ALPHA-D-GLUCOSE-1,6-BISPHOSPHATE-DEPENDENT)"/>
    <property type="match status" value="1"/>
</dbReference>
<dbReference type="PANTHER" id="PTHR42946">
    <property type="entry name" value="PHOSPHOHEXOSE MUTASE"/>
    <property type="match status" value="1"/>
</dbReference>
<dbReference type="Pfam" id="PF02878">
    <property type="entry name" value="PGM_PMM_I"/>
    <property type="match status" value="1"/>
</dbReference>
<dbReference type="Pfam" id="PF02879">
    <property type="entry name" value="PGM_PMM_II"/>
    <property type="match status" value="1"/>
</dbReference>
<dbReference type="Pfam" id="PF02880">
    <property type="entry name" value="PGM_PMM_III"/>
    <property type="match status" value="1"/>
</dbReference>
<dbReference type="Pfam" id="PF00408">
    <property type="entry name" value="PGM_PMM_IV"/>
    <property type="match status" value="1"/>
</dbReference>
<dbReference type="PRINTS" id="PR00509">
    <property type="entry name" value="PGMPMM"/>
</dbReference>
<dbReference type="SUPFAM" id="SSF55957">
    <property type="entry name" value="Phosphoglucomutase, C-terminal domain"/>
    <property type="match status" value="1"/>
</dbReference>
<dbReference type="SUPFAM" id="SSF53738">
    <property type="entry name" value="Phosphoglucomutase, first 3 domains"/>
    <property type="match status" value="3"/>
</dbReference>
<dbReference type="PROSITE" id="PS00710">
    <property type="entry name" value="PGM_PMM"/>
    <property type="match status" value="1"/>
</dbReference>
<sequence length="451" mass="48569">MTRKFFGTDGIRGQANSFPMTPEIAMKVGMAVGYIFRRKGQASRVVIGKDTRRSGYMLENALVAGFTAAGMDVFLLGPIPTPAVAMLCRSLRADIGVMISASHNPFYDNGIKLFGPDGFKLSDQIELQIEAMIEGDMTPFLASHGDVGRAKRVDGDIYRYIEFAKRTLPRNISLNGLRVVVDCANGAGYKVAPAALWELGAEVITINNEPNGININEDCGSTHPIGLMKKVHEVRADVGIALDGDADRVLLVDENGTVIDGDQLMAVIAESWAASNRLEGGGIVATVMSNLGLERFLADRNLTLARTKVGDRYVVEHMREHGFNVGGEQSGHIVLSDFATTGDGLISALQILAVAQEQNKPISDVCRKFQPVPQLLKNVRTTGGKPLENKRVKSAIDEAKERLGGQGRLVIRPSGTEPLIRVMAEGDDRGLVEKVVNDIIDVISSESSAAA</sequence>
<accession>A5VS47</accession>
<protein>
    <recommendedName>
        <fullName evidence="1">Phosphoglucosamine mutase</fullName>
        <ecNumber evidence="1">5.4.2.10</ecNumber>
    </recommendedName>
</protein>
<evidence type="ECO:0000255" key="1">
    <source>
        <dbReference type="HAMAP-Rule" id="MF_01554"/>
    </source>
</evidence>